<organism>
    <name type="scientific">Ralstonia nicotianae (strain ATCC BAA-1114 / GMI1000)</name>
    <name type="common">Ralstonia solanacearum</name>
    <dbReference type="NCBI Taxonomy" id="267608"/>
    <lineage>
        <taxon>Bacteria</taxon>
        <taxon>Pseudomonadati</taxon>
        <taxon>Pseudomonadota</taxon>
        <taxon>Betaproteobacteria</taxon>
        <taxon>Burkholderiales</taxon>
        <taxon>Burkholderiaceae</taxon>
        <taxon>Ralstonia</taxon>
        <taxon>Ralstonia solanacearum species complex</taxon>
    </lineage>
</organism>
<comment type="function">
    <text evidence="1">Formation of pseudouridine at positions 38, 39 and 40 in the anticodon stem and loop of transfer RNAs.</text>
</comment>
<comment type="catalytic activity">
    <reaction evidence="1">
        <text>uridine(38/39/40) in tRNA = pseudouridine(38/39/40) in tRNA</text>
        <dbReference type="Rhea" id="RHEA:22376"/>
        <dbReference type="Rhea" id="RHEA-COMP:10085"/>
        <dbReference type="Rhea" id="RHEA-COMP:10087"/>
        <dbReference type="ChEBI" id="CHEBI:65314"/>
        <dbReference type="ChEBI" id="CHEBI:65315"/>
        <dbReference type="EC" id="5.4.99.12"/>
    </reaction>
</comment>
<comment type="subunit">
    <text evidence="1">Homodimer.</text>
</comment>
<comment type="similarity">
    <text evidence="1">Belongs to the tRNA pseudouridine synthase TruA family.</text>
</comment>
<reference key="1">
    <citation type="journal article" date="2002" name="Nature">
        <title>Genome sequence of the plant pathogen Ralstonia solanacearum.</title>
        <authorList>
            <person name="Salanoubat M."/>
            <person name="Genin S."/>
            <person name="Artiguenave F."/>
            <person name="Gouzy J."/>
            <person name="Mangenot S."/>
            <person name="Arlat M."/>
            <person name="Billault A."/>
            <person name="Brottier P."/>
            <person name="Camus J.-C."/>
            <person name="Cattolico L."/>
            <person name="Chandler M."/>
            <person name="Choisne N."/>
            <person name="Claudel-Renard C."/>
            <person name="Cunnac S."/>
            <person name="Demange N."/>
            <person name="Gaspin C."/>
            <person name="Lavie M."/>
            <person name="Moisan A."/>
            <person name="Robert C."/>
            <person name="Saurin W."/>
            <person name="Schiex T."/>
            <person name="Siguier P."/>
            <person name="Thebault P."/>
            <person name="Whalen M."/>
            <person name="Wincker P."/>
            <person name="Levy M."/>
            <person name="Weissenbach J."/>
            <person name="Boucher C.A."/>
        </authorList>
    </citation>
    <scope>NUCLEOTIDE SEQUENCE [LARGE SCALE GENOMIC DNA]</scope>
    <source>
        <strain>ATCC BAA-1114 / GMI1000</strain>
    </source>
</reference>
<accession>Q8XXX8</accession>
<proteinExistence type="inferred from homology"/>
<gene>
    <name evidence="1" type="primary">truA</name>
    <name type="ordered locus">RSc1985</name>
    <name type="ORF">RS03414</name>
</gene>
<evidence type="ECO:0000255" key="1">
    <source>
        <dbReference type="HAMAP-Rule" id="MF_00171"/>
    </source>
</evidence>
<dbReference type="EC" id="5.4.99.12" evidence="1"/>
<dbReference type="EMBL" id="AL646052">
    <property type="protein sequence ID" value="CAD15687.1"/>
    <property type="molecule type" value="Genomic_DNA"/>
</dbReference>
<dbReference type="RefSeq" id="WP_011001921.1">
    <property type="nucleotide sequence ID" value="NC_003295.1"/>
</dbReference>
<dbReference type="SMR" id="Q8XXX8"/>
<dbReference type="STRING" id="267608.RSc1985"/>
<dbReference type="EnsemblBacteria" id="CAD15687">
    <property type="protein sequence ID" value="CAD15687"/>
    <property type="gene ID" value="RSc1985"/>
</dbReference>
<dbReference type="KEGG" id="rso:RSc1985"/>
<dbReference type="eggNOG" id="COG0101">
    <property type="taxonomic scope" value="Bacteria"/>
</dbReference>
<dbReference type="HOGENOM" id="CLU_014673_0_2_4"/>
<dbReference type="Proteomes" id="UP000001436">
    <property type="component" value="Chromosome"/>
</dbReference>
<dbReference type="GO" id="GO:0003723">
    <property type="term" value="F:RNA binding"/>
    <property type="evidence" value="ECO:0007669"/>
    <property type="project" value="InterPro"/>
</dbReference>
<dbReference type="GO" id="GO:0160147">
    <property type="term" value="F:tRNA pseudouridine(38-40) synthase activity"/>
    <property type="evidence" value="ECO:0007669"/>
    <property type="project" value="UniProtKB-EC"/>
</dbReference>
<dbReference type="GO" id="GO:0031119">
    <property type="term" value="P:tRNA pseudouridine synthesis"/>
    <property type="evidence" value="ECO:0007669"/>
    <property type="project" value="UniProtKB-UniRule"/>
</dbReference>
<dbReference type="CDD" id="cd02570">
    <property type="entry name" value="PseudoU_synth_EcTruA"/>
    <property type="match status" value="1"/>
</dbReference>
<dbReference type="FunFam" id="3.30.70.580:FF:000001">
    <property type="entry name" value="tRNA pseudouridine synthase A"/>
    <property type="match status" value="1"/>
</dbReference>
<dbReference type="Gene3D" id="3.30.70.660">
    <property type="entry name" value="Pseudouridine synthase I, catalytic domain, C-terminal subdomain"/>
    <property type="match status" value="1"/>
</dbReference>
<dbReference type="Gene3D" id="3.30.70.580">
    <property type="entry name" value="Pseudouridine synthase I, catalytic domain, N-terminal subdomain"/>
    <property type="match status" value="1"/>
</dbReference>
<dbReference type="HAMAP" id="MF_00171">
    <property type="entry name" value="TruA"/>
    <property type="match status" value="1"/>
</dbReference>
<dbReference type="InterPro" id="IPR020103">
    <property type="entry name" value="PsdUridine_synth_cat_dom_sf"/>
</dbReference>
<dbReference type="InterPro" id="IPR001406">
    <property type="entry name" value="PsdUridine_synth_TruA"/>
</dbReference>
<dbReference type="InterPro" id="IPR020097">
    <property type="entry name" value="PsdUridine_synth_TruA_a/b_dom"/>
</dbReference>
<dbReference type="InterPro" id="IPR020095">
    <property type="entry name" value="PsdUridine_synth_TruA_C"/>
</dbReference>
<dbReference type="InterPro" id="IPR020094">
    <property type="entry name" value="TruA/RsuA/RluB/E/F_N"/>
</dbReference>
<dbReference type="NCBIfam" id="TIGR00071">
    <property type="entry name" value="hisT_truA"/>
    <property type="match status" value="1"/>
</dbReference>
<dbReference type="PANTHER" id="PTHR11142">
    <property type="entry name" value="PSEUDOURIDYLATE SYNTHASE"/>
    <property type="match status" value="1"/>
</dbReference>
<dbReference type="PANTHER" id="PTHR11142:SF0">
    <property type="entry name" value="TRNA PSEUDOURIDINE SYNTHASE-LIKE 1"/>
    <property type="match status" value="1"/>
</dbReference>
<dbReference type="Pfam" id="PF01416">
    <property type="entry name" value="PseudoU_synth_1"/>
    <property type="match status" value="2"/>
</dbReference>
<dbReference type="PIRSF" id="PIRSF001430">
    <property type="entry name" value="tRNA_psdUrid_synth"/>
    <property type="match status" value="1"/>
</dbReference>
<dbReference type="SUPFAM" id="SSF55120">
    <property type="entry name" value="Pseudouridine synthase"/>
    <property type="match status" value="1"/>
</dbReference>
<keyword id="KW-0413">Isomerase</keyword>
<keyword id="KW-1185">Reference proteome</keyword>
<keyword id="KW-0819">tRNA processing</keyword>
<feature type="chain" id="PRO_0000057435" description="tRNA pseudouridine synthase A">
    <location>
        <begin position="1"/>
        <end position="274"/>
    </location>
</feature>
<feature type="active site" description="Nucleophile" evidence="1">
    <location>
        <position position="52"/>
    </location>
</feature>
<feature type="binding site" evidence="1">
    <location>
        <position position="110"/>
    </location>
    <ligand>
        <name>substrate</name>
    </ligand>
</feature>
<name>TRUA_RALN1</name>
<sequence length="274" mass="29814">MTRIALGIQYDGAAFSGWQSQPHGNTVQDVLEAALREFAGVALPTTVAGRTDAGVHALGQVVHLDTELVRDPFSWVRGTNAFLPPTVAVRWAQAMPEDFHARFSAHRRTYYYALTYGPTRAPLLEGKAGYVTLPPGQSLDVTAMHEAAQVLVGEHDFSSFRAAECQAKSPVKTMYSTEVRGQGEWVFVRIRGSAFLHHMVRNIMGCLVAIGRGKRPAAWMGEVLAARDRKAAAPTFMPDGLYLAEVGYPDAFRLPASPASSSLFRGVFDEHAGP</sequence>
<protein>
    <recommendedName>
        <fullName evidence="1">tRNA pseudouridine synthase A</fullName>
        <ecNumber evidence="1">5.4.99.12</ecNumber>
    </recommendedName>
    <alternativeName>
        <fullName evidence="1">tRNA pseudouridine(38-40) synthase</fullName>
    </alternativeName>
    <alternativeName>
        <fullName evidence="1">tRNA pseudouridylate synthase I</fullName>
    </alternativeName>
    <alternativeName>
        <fullName evidence="1">tRNA-uridine isomerase I</fullName>
    </alternativeName>
</protein>